<sequence length="98" mass="10748">MSLVYMNIMTAFMVALAGLLMYRSHLMSSLLCLEGMMLSLFVMASLTILNSHFTLASMMPIILLVFAACEAALGLSLLVKVSNTYGTDYVQNLNLLQC</sequence>
<accession>Q2V091</accession>
<feature type="chain" id="PRO_0000274990" description="NADH-ubiquinone oxidoreductase chain 4L">
    <location>
        <begin position="1"/>
        <end position="98"/>
    </location>
</feature>
<feature type="transmembrane region" description="Helical" evidence="3">
    <location>
        <begin position="1"/>
        <end position="21"/>
    </location>
</feature>
<feature type="transmembrane region" description="Helical" evidence="3">
    <location>
        <begin position="29"/>
        <end position="49"/>
    </location>
</feature>
<feature type="transmembrane region" description="Helical" evidence="3">
    <location>
        <begin position="59"/>
        <end position="79"/>
    </location>
</feature>
<proteinExistence type="inferred from homology"/>
<geneLocation type="mitochondrion"/>
<keyword id="KW-0249">Electron transport</keyword>
<keyword id="KW-0472">Membrane</keyword>
<keyword id="KW-0496">Mitochondrion</keyword>
<keyword id="KW-0999">Mitochondrion inner membrane</keyword>
<keyword id="KW-0520">NAD</keyword>
<keyword id="KW-0679">Respiratory chain</keyword>
<keyword id="KW-1278">Translocase</keyword>
<keyword id="KW-0812">Transmembrane</keyword>
<keyword id="KW-1133">Transmembrane helix</keyword>
<keyword id="KW-0813">Transport</keyword>
<keyword id="KW-0830">Ubiquinone</keyword>
<name>NU4LM_CEREL</name>
<reference key="1">
    <citation type="submission" date="2005-12" db="EMBL/GenBank/DDBJ databases">
        <title>The complete nucleotide sequence of mitochondrial genome in the rein deer (Rangifer tarandus) and red deer (Cervus elaphus).</title>
        <authorList>
            <person name="Wada K."/>
            <person name="Nakamura M."/>
            <person name="Nishibori M."/>
            <person name="Yokohama M."/>
        </authorList>
    </citation>
    <scope>NUCLEOTIDE SEQUENCE [GENOMIC DNA]</scope>
    <source>
        <tissue>Antler</tissue>
    </source>
</reference>
<protein>
    <recommendedName>
        <fullName>NADH-ubiquinone oxidoreductase chain 4L</fullName>
        <ecNumber>7.1.1.2</ecNumber>
    </recommendedName>
    <alternativeName>
        <fullName>NADH dehydrogenase subunit 4L</fullName>
    </alternativeName>
</protein>
<evidence type="ECO:0000250" key="1">
    <source>
        <dbReference type="UniProtKB" id="P03901"/>
    </source>
</evidence>
<evidence type="ECO:0000250" key="2">
    <source>
        <dbReference type="UniProtKB" id="P03902"/>
    </source>
</evidence>
<evidence type="ECO:0000255" key="3"/>
<evidence type="ECO:0000305" key="4"/>
<organism>
    <name type="scientific">Cervus elaphus</name>
    <name type="common">Red deer</name>
    <dbReference type="NCBI Taxonomy" id="9860"/>
    <lineage>
        <taxon>Eukaryota</taxon>
        <taxon>Metazoa</taxon>
        <taxon>Chordata</taxon>
        <taxon>Craniata</taxon>
        <taxon>Vertebrata</taxon>
        <taxon>Euteleostomi</taxon>
        <taxon>Mammalia</taxon>
        <taxon>Eutheria</taxon>
        <taxon>Laurasiatheria</taxon>
        <taxon>Artiodactyla</taxon>
        <taxon>Ruminantia</taxon>
        <taxon>Pecora</taxon>
        <taxon>Cervidae</taxon>
        <taxon>Cervinae</taxon>
        <taxon>Cervus</taxon>
    </lineage>
</organism>
<dbReference type="EC" id="7.1.1.2"/>
<dbReference type="EMBL" id="AB245427">
    <property type="protein sequence ID" value="BAE66708.1"/>
    <property type="molecule type" value="Genomic_DNA"/>
</dbReference>
<dbReference type="RefSeq" id="YP_448954.1">
    <property type="nucleotide sequence ID" value="NC_007704.2"/>
</dbReference>
<dbReference type="SMR" id="Q2V091"/>
<dbReference type="GeneID" id="3861301"/>
<dbReference type="CTD" id="4539"/>
<dbReference type="GO" id="GO:0005743">
    <property type="term" value="C:mitochondrial inner membrane"/>
    <property type="evidence" value="ECO:0000250"/>
    <property type="project" value="UniProtKB"/>
</dbReference>
<dbReference type="GO" id="GO:0045271">
    <property type="term" value="C:respiratory chain complex I"/>
    <property type="evidence" value="ECO:0000250"/>
    <property type="project" value="UniProtKB"/>
</dbReference>
<dbReference type="GO" id="GO:0008137">
    <property type="term" value="F:NADH dehydrogenase (ubiquinone) activity"/>
    <property type="evidence" value="ECO:0000250"/>
    <property type="project" value="UniProtKB"/>
</dbReference>
<dbReference type="GO" id="GO:0042773">
    <property type="term" value="P:ATP synthesis coupled electron transport"/>
    <property type="evidence" value="ECO:0007669"/>
    <property type="project" value="InterPro"/>
</dbReference>
<dbReference type="FunFam" id="1.10.287.3510:FF:000002">
    <property type="entry name" value="NADH-ubiquinone oxidoreductase chain 4L"/>
    <property type="match status" value="1"/>
</dbReference>
<dbReference type="Gene3D" id="1.10.287.3510">
    <property type="match status" value="1"/>
</dbReference>
<dbReference type="InterPro" id="IPR001133">
    <property type="entry name" value="NADH_UbQ_OxRdtase_chain4L/K"/>
</dbReference>
<dbReference type="InterPro" id="IPR039428">
    <property type="entry name" value="NUOK/Mnh_C1-like"/>
</dbReference>
<dbReference type="PANTHER" id="PTHR11434:SF0">
    <property type="entry name" value="NADH-UBIQUINONE OXIDOREDUCTASE CHAIN 4L"/>
    <property type="match status" value="1"/>
</dbReference>
<dbReference type="PANTHER" id="PTHR11434">
    <property type="entry name" value="NADH-UBIQUINONE OXIDOREDUCTASE SUBUNIT ND4L"/>
    <property type="match status" value="1"/>
</dbReference>
<dbReference type="Pfam" id="PF00420">
    <property type="entry name" value="Oxidored_q2"/>
    <property type="match status" value="1"/>
</dbReference>
<gene>
    <name type="primary">MT-ND4L</name>
    <name type="synonym">MTND4L</name>
    <name type="synonym">NADH4L</name>
    <name type="synonym">ND4L</name>
</gene>
<comment type="function">
    <text evidence="1">Core subunit of the mitochondrial membrane respiratory chain NADH dehydrogenase (Complex I) which catalyzes electron transfer from NADH through the respiratory chain, using ubiquinone as an electron acceptor. Part of the enzyme membrane arm which is embedded in the lipid bilayer and involved in proton translocation.</text>
</comment>
<comment type="catalytic activity">
    <reaction evidence="1">
        <text>a ubiquinone + NADH + 5 H(+)(in) = a ubiquinol + NAD(+) + 4 H(+)(out)</text>
        <dbReference type="Rhea" id="RHEA:29091"/>
        <dbReference type="Rhea" id="RHEA-COMP:9565"/>
        <dbReference type="Rhea" id="RHEA-COMP:9566"/>
        <dbReference type="ChEBI" id="CHEBI:15378"/>
        <dbReference type="ChEBI" id="CHEBI:16389"/>
        <dbReference type="ChEBI" id="CHEBI:17976"/>
        <dbReference type="ChEBI" id="CHEBI:57540"/>
        <dbReference type="ChEBI" id="CHEBI:57945"/>
        <dbReference type="EC" id="7.1.1.2"/>
    </reaction>
    <physiologicalReaction direction="left-to-right" evidence="1">
        <dbReference type="Rhea" id="RHEA:29092"/>
    </physiologicalReaction>
</comment>
<comment type="subunit">
    <text evidence="2">Core subunit of respiratory chain NADH dehydrogenase (Complex I) which is composed of 45 different subunits.</text>
</comment>
<comment type="subcellular location">
    <subcellularLocation>
        <location evidence="2">Mitochondrion inner membrane</location>
        <topology evidence="3">Multi-pass membrane protein</topology>
    </subcellularLocation>
</comment>
<comment type="similarity">
    <text evidence="4">Belongs to the complex I subunit 4L family.</text>
</comment>